<dbReference type="EC" id="2.7.1.167" evidence="1"/>
<dbReference type="EC" id="2.7.7.70" evidence="1"/>
<dbReference type="EMBL" id="CU928163">
    <property type="protein sequence ID" value="CAR14690.1"/>
    <property type="molecule type" value="Genomic_DNA"/>
</dbReference>
<dbReference type="RefSeq" id="WP_000869187.1">
    <property type="nucleotide sequence ID" value="NC_011751.1"/>
</dbReference>
<dbReference type="RefSeq" id="YP_002414195.1">
    <property type="nucleotide sequence ID" value="NC_011751.1"/>
</dbReference>
<dbReference type="SMR" id="B7ND40"/>
<dbReference type="STRING" id="585056.ECUMN_3534"/>
<dbReference type="KEGG" id="eum:ECUMN_3534"/>
<dbReference type="PATRIC" id="fig|585056.7.peg.3709"/>
<dbReference type="HOGENOM" id="CLU_021150_2_1_6"/>
<dbReference type="UniPathway" id="UPA00356">
    <property type="reaction ID" value="UER00437"/>
</dbReference>
<dbReference type="UniPathway" id="UPA00356">
    <property type="reaction ID" value="UER00439"/>
</dbReference>
<dbReference type="Proteomes" id="UP000007097">
    <property type="component" value="Chromosome"/>
</dbReference>
<dbReference type="GO" id="GO:0005829">
    <property type="term" value="C:cytosol"/>
    <property type="evidence" value="ECO:0007669"/>
    <property type="project" value="TreeGrafter"/>
</dbReference>
<dbReference type="GO" id="GO:0005524">
    <property type="term" value="F:ATP binding"/>
    <property type="evidence" value="ECO:0007669"/>
    <property type="project" value="UniProtKB-UniRule"/>
</dbReference>
<dbReference type="GO" id="GO:0033785">
    <property type="term" value="F:heptose 7-phosphate kinase activity"/>
    <property type="evidence" value="ECO:0007669"/>
    <property type="project" value="UniProtKB-UniRule"/>
</dbReference>
<dbReference type="GO" id="GO:0033786">
    <property type="term" value="F:heptose-1-phosphate adenylyltransferase activity"/>
    <property type="evidence" value="ECO:0007669"/>
    <property type="project" value="UniProtKB-UniRule"/>
</dbReference>
<dbReference type="GO" id="GO:0016773">
    <property type="term" value="F:phosphotransferase activity, alcohol group as acceptor"/>
    <property type="evidence" value="ECO:0007669"/>
    <property type="project" value="InterPro"/>
</dbReference>
<dbReference type="GO" id="GO:0097171">
    <property type="term" value="P:ADP-L-glycero-beta-D-manno-heptose biosynthetic process"/>
    <property type="evidence" value="ECO:0007669"/>
    <property type="project" value="UniProtKB-UniPathway"/>
</dbReference>
<dbReference type="CDD" id="cd01172">
    <property type="entry name" value="RfaE_like"/>
    <property type="match status" value="1"/>
</dbReference>
<dbReference type="FunFam" id="3.40.1190.20:FF:000002">
    <property type="entry name" value="Bifunctional protein HldE"/>
    <property type="match status" value="1"/>
</dbReference>
<dbReference type="FunFam" id="3.40.50.620:FF:000028">
    <property type="entry name" value="Bifunctional protein HldE"/>
    <property type="match status" value="1"/>
</dbReference>
<dbReference type="Gene3D" id="3.40.1190.20">
    <property type="match status" value="1"/>
</dbReference>
<dbReference type="Gene3D" id="3.40.50.620">
    <property type="entry name" value="HUPs"/>
    <property type="match status" value="1"/>
</dbReference>
<dbReference type="HAMAP" id="MF_01603">
    <property type="entry name" value="HldE"/>
    <property type="match status" value="1"/>
</dbReference>
<dbReference type="InterPro" id="IPR023030">
    <property type="entry name" value="Bifunc_HldE"/>
</dbReference>
<dbReference type="InterPro" id="IPR002173">
    <property type="entry name" value="Carboh/pur_kinase_PfkB_CS"/>
</dbReference>
<dbReference type="InterPro" id="IPR004821">
    <property type="entry name" value="Cyt_trans-like"/>
</dbReference>
<dbReference type="InterPro" id="IPR011611">
    <property type="entry name" value="PfkB_dom"/>
</dbReference>
<dbReference type="InterPro" id="IPR011913">
    <property type="entry name" value="RfaE_dom_I"/>
</dbReference>
<dbReference type="InterPro" id="IPR011914">
    <property type="entry name" value="RfaE_dom_II"/>
</dbReference>
<dbReference type="InterPro" id="IPR029056">
    <property type="entry name" value="Ribokinase-like"/>
</dbReference>
<dbReference type="InterPro" id="IPR014729">
    <property type="entry name" value="Rossmann-like_a/b/a_fold"/>
</dbReference>
<dbReference type="NCBIfam" id="TIGR00125">
    <property type="entry name" value="cyt_tran_rel"/>
    <property type="match status" value="1"/>
</dbReference>
<dbReference type="NCBIfam" id="NF008454">
    <property type="entry name" value="PRK11316.1"/>
    <property type="match status" value="1"/>
</dbReference>
<dbReference type="NCBIfam" id="TIGR02198">
    <property type="entry name" value="rfaE_dom_I"/>
    <property type="match status" value="1"/>
</dbReference>
<dbReference type="NCBIfam" id="TIGR02199">
    <property type="entry name" value="rfaE_dom_II"/>
    <property type="match status" value="1"/>
</dbReference>
<dbReference type="PANTHER" id="PTHR46969">
    <property type="entry name" value="BIFUNCTIONAL PROTEIN HLDE"/>
    <property type="match status" value="1"/>
</dbReference>
<dbReference type="PANTHER" id="PTHR46969:SF1">
    <property type="entry name" value="BIFUNCTIONAL PROTEIN HLDE"/>
    <property type="match status" value="1"/>
</dbReference>
<dbReference type="Pfam" id="PF01467">
    <property type="entry name" value="CTP_transf_like"/>
    <property type="match status" value="1"/>
</dbReference>
<dbReference type="Pfam" id="PF00294">
    <property type="entry name" value="PfkB"/>
    <property type="match status" value="1"/>
</dbReference>
<dbReference type="SUPFAM" id="SSF52374">
    <property type="entry name" value="Nucleotidylyl transferase"/>
    <property type="match status" value="1"/>
</dbReference>
<dbReference type="SUPFAM" id="SSF53613">
    <property type="entry name" value="Ribokinase-like"/>
    <property type="match status" value="1"/>
</dbReference>
<dbReference type="PROSITE" id="PS00583">
    <property type="entry name" value="PFKB_KINASES_1"/>
    <property type="match status" value="1"/>
</dbReference>
<sequence length="477" mass="51081">MKVTLPEFERAGVMVVGDVMLDRYWYGPTSRISPEAPVPVVKVNTIEERPGGAANVAMNIASLGANARLVGLTGIDDAARALSKSLADVNVKCDFVSVPTHPTITKLRVLSRNQQLIRLDFEEGFEGVDPQPLHERINQALSSIGALVLSDYAKGALASVQQMIQLARKAGVPVLIDPKGTDFERYRGATLLTPNLSEFEAVVGKCKTEEEIVERGMKLIADYELSALLVTRSEQGMSLLQPGKTPLHMPTQAQEVYDVTGAGDTVIGVLAATLAAGNSLEEACFFANAAAGVVVGKLGTSTVSPIELENAVRGRADTGFGVMTEEELKLAVAAARKRGEKVVMTNGVFDILHAGHVSYLANARKLGDRLIVAVNSDASTKRLKGDSRPVNPLEQRMIVLGALEAVDWVVSFEEDTPQRLIAGILPDLLVKGGDYKPEEIAGSKEVWANGGEVLVLNFEDGCSTTNIIKKIQQDKKG</sequence>
<keyword id="KW-0007">Acetylation</keyword>
<keyword id="KW-0067">ATP-binding</keyword>
<keyword id="KW-0119">Carbohydrate metabolism</keyword>
<keyword id="KW-0418">Kinase</keyword>
<keyword id="KW-0511">Multifunctional enzyme</keyword>
<keyword id="KW-0547">Nucleotide-binding</keyword>
<keyword id="KW-0548">Nucleotidyltransferase</keyword>
<keyword id="KW-0808">Transferase</keyword>
<feature type="chain" id="PRO_1000185808" description="Bifunctional protein HldE">
    <location>
        <begin position="1"/>
        <end position="477"/>
    </location>
</feature>
<feature type="region of interest" description="Ribokinase">
    <location>
        <begin position="1"/>
        <end position="318"/>
    </location>
</feature>
<feature type="region of interest" description="Cytidylyltransferase">
    <location>
        <begin position="344"/>
        <end position="477"/>
    </location>
</feature>
<feature type="active site" evidence="1">
    <location>
        <position position="264"/>
    </location>
</feature>
<feature type="binding site" evidence="1">
    <location>
        <begin position="195"/>
        <end position="198"/>
    </location>
    <ligand>
        <name>ATP</name>
        <dbReference type="ChEBI" id="CHEBI:30616"/>
    </ligand>
</feature>
<feature type="modified residue" description="N6-acetyllysine" evidence="1">
    <location>
        <position position="179"/>
    </location>
</feature>
<comment type="function">
    <text evidence="1">Catalyzes the phosphorylation of D-glycero-D-manno-heptose 7-phosphate at the C-1 position to selectively form D-glycero-beta-D-manno-heptose-1,7-bisphosphate.</text>
</comment>
<comment type="function">
    <text evidence="1">Catalyzes the ADP transfer from ATP to D-glycero-beta-D-manno-heptose 1-phosphate, yielding ADP-D-glycero-beta-D-manno-heptose.</text>
</comment>
<comment type="catalytic activity">
    <reaction evidence="1">
        <text>D-glycero-beta-D-manno-heptose 7-phosphate + ATP = D-glycero-beta-D-manno-heptose 1,7-bisphosphate + ADP + H(+)</text>
        <dbReference type="Rhea" id="RHEA:27473"/>
        <dbReference type="ChEBI" id="CHEBI:15378"/>
        <dbReference type="ChEBI" id="CHEBI:30616"/>
        <dbReference type="ChEBI" id="CHEBI:60204"/>
        <dbReference type="ChEBI" id="CHEBI:60208"/>
        <dbReference type="ChEBI" id="CHEBI:456216"/>
        <dbReference type="EC" id="2.7.1.167"/>
    </reaction>
</comment>
<comment type="catalytic activity">
    <reaction evidence="1">
        <text>D-glycero-beta-D-manno-heptose 1-phosphate + ATP + H(+) = ADP-D-glycero-beta-D-manno-heptose + diphosphate</text>
        <dbReference type="Rhea" id="RHEA:27465"/>
        <dbReference type="ChEBI" id="CHEBI:15378"/>
        <dbReference type="ChEBI" id="CHEBI:30616"/>
        <dbReference type="ChEBI" id="CHEBI:33019"/>
        <dbReference type="ChEBI" id="CHEBI:59967"/>
        <dbReference type="ChEBI" id="CHEBI:61593"/>
        <dbReference type="EC" id="2.7.7.70"/>
    </reaction>
</comment>
<comment type="pathway">
    <text evidence="1">Nucleotide-sugar biosynthesis; ADP-L-glycero-beta-D-manno-heptose biosynthesis; ADP-L-glycero-beta-D-manno-heptose from D-glycero-beta-D-manno-heptose 7-phosphate: step 1/4.</text>
</comment>
<comment type="pathway">
    <text evidence="1">Nucleotide-sugar biosynthesis; ADP-L-glycero-beta-D-manno-heptose biosynthesis; ADP-L-glycero-beta-D-manno-heptose from D-glycero-beta-D-manno-heptose 7-phosphate: step 3/4.</text>
</comment>
<comment type="subunit">
    <text evidence="1">Homodimer.</text>
</comment>
<comment type="similarity">
    <text evidence="1">In the N-terminal section; belongs to the carbohydrate kinase PfkB family.</text>
</comment>
<comment type="similarity">
    <text evidence="1">In the C-terminal section; belongs to the cytidylyltransferase family.</text>
</comment>
<name>HLDE_ECOLU</name>
<gene>
    <name evidence="1" type="primary">hldE</name>
    <name type="ordered locus">ECUMN_3534</name>
</gene>
<evidence type="ECO:0000255" key="1">
    <source>
        <dbReference type="HAMAP-Rule" id="MF_01603"/>
    </source>
</evidence>
<reference key="1">
    <citation type="journal article" date="2009" name="PLoS Genet.">
        <title>Organised genome dynamics in the Escherichia coli species results in highly diverse adaptive paths.</title>
        <authorList>
            <person name="Touchon M."/>
            <person name="Hoede C."/>
            <person name="Tenaillon O."/>
            <person name="Barbe V."/>
            <person name="Baeriswyl S."/>
            <person name="Bidet P."/>
            <person name="Bingen E."/>
            <person name="Bonacorsi S."/>
            <person name="Bouchier C."/>
            <person name="Bouvet O."/>
            <person name="Calteau A."/>
            <person name="Chiapello H."/>
            <person name="Clermont O."/>
            <person name="Cruveiller S."/>
            <person name="Danchin A."/>
            <person name="Diard M."/>
            <person name="Dossat C."/>
            <person name="Karoui M.E."/>
            <person name="Frapy E."/>
            <person name="Garry L."/>
            <person name="Ghigo J.M."/>
            <person name="Gilles A.M."/>
            <person name="Johnson J."/>
            <person name="Le Bouguenec C."/>
            <person name="Lescat M."/>
            <person name="Mangenot S."/>
            <person name="Martinez-Jehanne V."/>
            <person name="Matic I."/>
            <person name="Nassif X."/>
            <person name="Oztas S."/>
            <person name="Petit M.A."/>
            <person name="Pichon C."/>
            <person name="Rouy Z."/>
            <person name="Ruf C.S."/>
            <person name="Schneider D."/>
            <person name="Tourret J."/>
            <person name="Vacherie B."/>
            <person name="Vallenet D."/>
            <person name="Medigue C."/>
            <person name="Rocha E.P.C."/>
            <person name="Denamur E."/>
        </authorList>
    </citation>
    <scope>NUCLEOTIDE SEQUENCE [LARGE SCALE GENOMIC DNA]</scope>
    <source>
        <strain>UMN026 / ExPEC</strain>
    </source>
</reference>
<proteinExistence type="inferred from homology"/>
<protein>
    <recommendedName>
        <fullName evidence="1">Bifunctional protein HldE</fullName>
    </recommendedName>
    <domain>
        <recommendedName>
            <fullName evidence="1">D-beta-D-heptose 7-phosphate kinase</fullName>
            <ecNumber evidence="1">2.7.1.167</ecNumber>
        </recommendedName>
        <alternativeName>
            <fullName evidence="1">D-beta-D-heptose 7-phosphotransferase</fullName>
        </alternativeName>
        <alternativeName>
            <fullName evidence="1">D-glycero-beta-D-manno-heptose-7-phosphate kinase</fullName>
        </alternativeName>
    </domain>
    <domain>
        <recommendedName>
            <fullName evidence="1">D-beta-D-heptose 1-phosphate adenylyltransferase</fullName>
            <ecNumber evidence="1">2.7.7.70</ecNumber>
        </recommendedName>
        <alternativeName>
            <fullName evidence="1">D-glycero-beta-D-manno-heptose 1-phosphate adenylyltransferase</fullName>
        </alternativeName>
    </domain>
</protein>
<organism>
    <name type="scientific">Escherichia coli O17:K52:H18 (strain UMN026 / ExPEC)</name>
    <dbReference type="NCBI Taxonomy" id="585056"/>
    <lineage>
        <taxon>Bacteria</taxon>
        <taxon>Pseudomonadati</taxon>
        <taxon>Pseudomonadota</taxon>
        <taxon>Gammaproteobacteria</taxon>
        <taxon>Enterobacterales</taxon>
        <taxon>Enterobacteriaceae</taxon>
        <taxon>Escherichia</taxon>
    </lineage>
</organism>
<accession>B7ND40</accession>